<sequence>MSWHPQYRSSKFRHVFGKPASKENCYDSVPITRSVHDNHFCAVNPHFIAVVTECAGGGAFLVIPLHQTGKLDPHYPKVCGHRGNVLDVKWNPFDDFEIASCSEDATIKIWSIPKQLLTRNLTAYRKELVGHARRVGLVEWHPTAANILFSAGYDYKVMIWNLDTKESVITSPMSTISCHQDVILSMSFNTNGSLLATTCKDRKIRVIDPRAGTVLQEASYKGHRASKVLFLGNLKKLMSTGTSRWNNRQVALWDQDNLSVPLMEEDLDGSSGVLFPFYDADTSMLYVVGKGDGNIRYYEVSADKPHLSYLTEYRSYNPQKGIGVMPKRGLDVSSCEIFRFYKLITTKSLIEPISMIVPRRSESYQEDIYPPTAGAQPSLTAQEWLSGMNRDPILVSLRPGSELLRPHPLPAERPIFNSMAPASPRLLNQTEKLAAEDGWRSSSLLEEKMPRWAAEHRLEEKKTWLTNGFDVFECPPPKTENELLQMFYRQQEEIRRLRELLTQREVQAKQLELEIKNLRMGSEQL</sequence>
<dbReference type="EMBL" id="U57057">
    <property type="protein sequence ID" value="AAB47807.1"/>
    <property type="molecule type" value="mRNA"/>
</dbReference>
<dbReference type="EMBL" id="U57058">
    <property type="protein sequence ID" value="AAB47808.1"/>
    <property type="molecule type" value="mRNA"/>
</dbReference>
<dbReference type="EMBL" id="AL137073">
    <property type="status" value="NOT_ANNOTATED_CDS"/>
    <property type="molecule type" value="Genomic_DNA"/>
</dbReference>
<dbReference type="EMBL" id="CH471105">
    <property type="protein sequence ID" value="EAW58879.1"/>
    <property type="molecule type" value="Genomic_DNA"/>
</dbReference>
<dbReference type="EMBL" id="BC000010">
    <property type="protein sequence ID" value="AAH00010.1"/>
    <property type="molecule type" value="mRNA"/>
</dbReference>
<dbReference type="EMBL" id="BC011690">
    <property type="protein sequence ID" value="AAH11690.1"/>
    <property type="molecule type" value="mRNA"/>
</dbReference>
<dbReference type="CCDS" id="CCDS6735.1"/>
<dbReference type="RefSeq" id="NP_003380.3">
    <property type="nucleotide sequence ID" value="NM_003389.3"/>
</dbReference>
<dbReference type="RefSeq" id="NP_438171.1">
    <property type="nucleotide sequence ID" value="NM_052820.4"/>
</dbReference>
<dbReference type="RefSeq" id="XP_011517288.1">
    <property type="nucleotide sequence ID" value="XM_011518986.4"/>
</dbReference>
<dbReference type="RefSeq" id="XP_054219730.1">
    <property type="nucleotide sequence ID" value="XM_054363755.1"/>
</dbReference>
<dbReference type="SMR" id="Q92828"/>
<dbReference type="BioGRID" id="113302">
    <property type="interactions" value="75"/>
</dbReference>
<dbReference type="CORUM" id="Q92828"/>
<dbReference type="DIP" id="DIP-59202N"/>
<dbReference type="FunCoup" id="Q92828">
    <property type="interactions" value="13"/>
</dbReference>
<dbReference type="IntAct" id="Q92828">
    <property type="interactions" value="64"/>
</dbReference>
<dbReference type="MINT" id="Q92828"/>
<dbReference type="STRING" id="9606.ENSP00000343746"/>
<dbReference type="GlyGen" id="Q92828">
    <property type="glycosylation" value="1 site, 1 O-linked glycan (1 site)"/>
</dbReference>
<dbReference type="iPTMnet" id="Q92828"/>
<dbReference type="PhosphoSitePlus" id="Q92828"/>
<dbReference type="BioMuta" id="CORO2A"/>
<dbReference type="DMDM" id="28381354"/>
<dbReference type="jPOST" id="Q92828"/>
<dbReference type="MassIVE" id="Q92828"/>
<dbReference type="PaxDb" id="9606-ENSP00000343746"/>
<dbReference type="PeptideAtlas" id="Q92828"/>
<dbReference type="ProteomicsDB" id="75505"/>
<dbReference type="Pumba" id="Q92828"/>
<dbReference type="Antibodypedia" id="48737">
    <property type="antibodies" value="94 antibodies from 20 providers"/>
</dbReference>
<dbReference type="DNASU" id="7464"/>
<dbReference type="Ensembl" id="ENST00000343933.9">
    <property type="protein sequence ID" value="ENSP00000343746.5"/>
    <property type="gene ID" value="ENSG00000106789.13"/>
</dbReference>
<dbReference type="Ensembl" id="ENST00000375077.5">
    <property type="protein sequence ID" value="ENSP00000364218.4"/>
    <property type="gene ID" value="ENSG00000106789.13"/>
</dbReference>
<dbReference type="GeneID" id="7464"/>
<dbReference type="KEGG" id="hsa:7464"/>
<dbReference type="MANE-Select" id="ENST00000375077.5">
    <property type="protein sequence ID" value="ENSP00000364218.4"/>
    <property type="RefSeq nucleotide sequence ID" value="NM_052820.4"/>
    <property type="RefSeq protein sequence ID" value="NP_438171.1"/>
</dbReference>
<dbReference type="UCSC" id="uc004ayl.4">
    <property type="organism name" value="human"/>
</dbReference>
<dbReference type="AGR" id="HGNC:2255"/>
<dbReference type="CTD" id="7464"/>
<dbReference type="DisGeNET" id="7464"/>
<dbReference type="GeneCards" id="CORO2A"/>
<dbReference type="HGNC" id="HGNC:2255">
    <property type="gene designation" value="CORO2A"/>
</dbReference>
<dbReference type="HPA" id="ENSG00000106789">
    <property type="expression patterns" value="Tissue enhanced (intestine)"/>
</dbReference>
<dbReference type="MIM" id="602159">
    <property type="type" value="gene"/>
</dbReference>
<dbReference type="neXtProt" id="NX_Q92828"/>
<dbReference type="OpenTargets" id="ENSG00000106789"/>
<dbReference type="PharmGKB" id="PA26771"/>
<dbReference type="VEuPathDB" id="HostDB:ENSG00000106789"/>
<dbReference type="eggNOG" id="KOG0303">
    <property type="taxonomic scope" value="Eukaryota"/>
</dbReference>
<dbReference type="GeneTree" id="ENSGT00940000155598"/>
<dbReference type="HOGENOM" id="CLU_026859_4_0_1"/>
<dbReference type="InParanoid" id="Q92828"/>
<dbReference type="OMA" id="PYLHFLM"/>
<dbReference type="OrthoDB" id="1850764at2759"/>
<dbReference type="PAN-GO" id="Q92828">
    <property type="GO annotations" value="1 GO annotation based on evolutionary models"/>
</dbReference>
<dbReference type="PhylomeDB" id="Q92828"/>
<dbReference type="TreeFam" id="TF314280"/>
<dbReference type="PathwayCommons" id="Q92828"/>
<dbReference type="SignaLink" id="Q92828"/>
<dbReference type="BioGRID-ORCS" id="7464">
    <property type="hits" value="11 hits in 1158 CRISPR screens"/>
</dbReference>
<dbReference type="CD-CODE" id="FB4E32DD">
    <property type="entry name" value="Presynaptic clusters and postsynaptic densities"/>
</dbReference>
<dbReference type="ChiTaRS" id="CORO2A">
    <property type="organism name" value="human"/>
</dbReference>
<dbReference type="GeneWiki" id="CORO2A"/>
<dbReference type="GenomeRNAi" id="7464"/>
<dbReference type="Pharos" id="Q92828">
    <property type="development level" value="Tbio"/>
</dbReference>
<dbReference type="PRO" id="PR:Q92828"/>
<dbReference type="Proteomes" id="UP000005640">
    <property type="component" value="Chromosome 9"/>
</dbReference>
<dbReference type="RNAct" id="Q92828">
    <property type="molecule type" value="protein"/>
</dbReference>
<dbReference type="Bgee" id="ENSG00000106789">
    <property type="expression patterns" value="Expressed in jejunal mucosa and 158 other cell types or tissues"/>
</dbReference>
<dbReference type="ExpressionAtlas" id="Q92828">
    <property type="expression patterns" value="baseline and differential"/>
</dbReference>
<dbReference type="GO" id="GO:0005903">
    <property type="term" value="C:brush border"/>
    <property type="evidence" value="ECO:0007669"/>
    <property type="project" value="Ensembl"/>
</dbReference>
<dbReference type="GO" id="GO:0017053">
    <property type="term" value="C:transcription repressor complex"/>
    <property type="evidence" value="ECO:0000314"/>
    <property type="project" value="UniProtKB"/>
</dbReference>
<dbReference type="GO" id="GO:0051015">
    <property type="term" value="F:actin filament binding"/>
    <property type="evidence" value="ECO:0000318"/>
    <property type="project" value="GO_Central"/>
</dbReference>
<dbReference type="GO" id="GO:0035556">
    <property type="term" value="P:intracellular signal transduction"/>
    <property type="evidence" value="ECO:0000304"/>
    <property type="project" value="ProtInc"/>
</dbReference>
<dbReference type="FunFam" id="2.130.10.10:FF:000053">
    <property type="entry name" value="Coronin"/>
    <property type="match status" value="1"/>
</dbReference>
<dbReference type="Gene3D" id="2.130.10.10">
    <property type="entry name" value="YVTN repeat-like/Quinoprotein amine dehydrogenase"/>
    <property type="match status" value="1"/>
</dbReference>
<dbReference type="InterPro" id="IPR015505">
    <property type="entry name" value="Coronin"/>
</dbReference>
<dbReference type="InterPro" id="IPR015048">
    <property type="entry name" value="DUF1899"/>
</dbReference>
<dbReference type="InterPro" id="IPR015943">
    <property type="entry name" value="WD40/YVTN_repeat-like_dom_sf"/>
</dbReference>
<dbReference type="InterPro" id="IPR019775">
    <property type="entry name" value="WD40_repeat_CS"/>
</dbReference>
<dbReference type="InterPro" id="IPR036322">
    <property type="entry name" value="WD40_repeat_dom_sf"/>
</dbReference>
<dbReference type="InterPro" id="IPR001680">
    <property type="entry name" value="WD40_rpt"/>
</dbReference>
<dbReference type="PANTHER" id="PTHR10856">
    <property type="entry name" value="CORONIN"/>
    <property type="match status" value="1"/>
</dbReference>
<dbReference type="PANTHER" id="PTHR10856:SF2">
    <property type="entry name" value="CORONIN-2A"/>
    <property type="match status" value="1"/>
</dbReference>
<dbReference type="Pfam" id="PF08953">
    <property type="entry name" value="DUF1899"/>
    <property type="match status" value="1"/>
</dbReference>
<dbReference type="Pfam" id="PF00400">
    <property type="entry name" value="WD40"/>
    <property type="match status" value="3"/>
</dbReference>
<dbReference type="Pfam" id="PF16300">
    <property type="entry name" value="WD40_4"/>
    <property type="match status" value="1"/>
</dbReference>
<dbReference type="SMART" id="SM01166">
    <property type="entry name" value="DUF1899"/>
    <property type="match status" value="1"/>
</dbReference>
<dbReference type="SMART" id="SM01167">
    <property type="entry name" value="DUF1900"/>
    <property type="match status" value="1"/>
</dbReference>
<dbReference type="SMART" id="SM00320">
    <property type="entry name" value="WD40"/>
    <property type="match status" value="4"/>
</dbReference>
<dbReference type="SUPFAM" id="SSF50978">
    <property type="entry name" value="WD40 repeat-like"/>
    <property type="match status" value="1"/>
</dbReference>
<dbReference type="PROSITE" id="PS00678">
    <property type="entry name" value="WD_REPEATS_1"/>
    <property type="match status" value="1"/>
</dbReference>
<dbReference type="PROSITE" id="PS50082">
    <property type="entry name" value="WD_REPEATS_2"/>
    <property type="match status" value="3"/>
</dbReference>
<dbReference type="PROSITE" id="PS50294">
    <property type="entry name" value="WD_REPEATS_REGION"/>
    <property type="match status" value="1"/>
</dbReference>
<keyword id="KW-0009">Actin-binding</keyword>
<keyword id="KW-0175">Coiled coil</keyword>
<keyword id="KW-1267">Proteomics identification</keyword>
<keyword id="KW-1185">Reference proteome</keyword>
<keyword id="KW-0677">Repeat</keyword>
<keyword id="KW-0853">WD repeat</keyword>
<feature type="chain" id="PRO_0000050928" description="Coronin-2A">
    <location>
        <begin position="1"/>
        <end position="525"/>
    </location>
</feature>
<feature type="repeat" description="WD 1">
    <location>
        <begin position="24"/>
        <end position="71"/>
    </location>
</feature>
<feature type="repeat" description="WD 2">
    <location>
        <begin position="72"/>
        <end position="122"/>
    </location>
</feature>
<feature type="repeat" description="WD 3">
    <location>
        <begin position="123"/>
        <end position="170"/>
    </location>
</feature>
<feature type="repeat" description="WD 4">
    <location>
        <begin position="171"/>
        <end position="214"/>
    </location>
</feature>
<feature type="repeat" description="WD 5">
    <location>
        <begin position="215"/>
        <end position="259"/>
    </location>
</feature>
<feature type="repeat" description="WD 6">
    <location>
        <begin position="260"/>
        <end position="305"/>
    </location>
</feature>
<feature type="repeat" description="WD 7">
    <location>
        <begin position="306"/>
        <end position="342"/>
    </location>
</feature>
<feature type="coiled-coil region" evidence="2">
    <location>
        <begin position="485"/>
        <end position="524"/>
    </location>
</feature>
<feature type="sequence variant" id="VAR_053390" description="In dbSNP:rs2231666.">
    <original>R</original>
    <variation>H</variation>
    <location>
        <position position="296"/>
    </location>
</feature>
<feature type="sequence variant" id="VAR_053391" description="In dbSNP:rs35787916.">
    <original>R</original>
    <variation>L</variation>
    <location>
        <position position="495"/>
    </location>
</feature>
<feature type="sequence conflict" description="In Ref. 1; AAB47807." evidence="3" ref="1">
    <original>A</original>
    <variation>G</variation>
    <location>
        <position position="59"/>
    </location>
</feature>
<feature type="sequence conflict" description="In Ref. 1; AAB47808." evidence="3" ref="1">
    <original>V</original>
    <variation>A</variation>
    <location>
        <position position="88"/>
    </location>
</feature>
<feature type="sequence conflict" description="In Ref. 1; AAB47807." evidence="3" ref="1">
    <original>R</original>
    <variation>G</variation>
    <location>
        <position position="360"/>
    </location>
</feature>
<feature type="sequence conflict" description="In Ref. 1; AAB47807." evidence="3" ref="1">
    <original>A</original>
    <variation>G</variation>
    <location>
        <position position="373"/>
    </location>
</feature>
<reference key="1">
    <citation type="journal article" date="1996" name="DNA Cell Biol.">
        <title>cDNA cloning of a novel WD repeat protein mapping to the 9q22.3 chromosomal region.</title>
        <authorList>
            <person name="Zaphiropoulos P.G."/>
            <person name="Toftgard R."/>
        </authorList>
    </citation>
    <scope>NUCLEOTIDE SEQUENCE [MRNA]</scope>
    <source>
        <tissue>Epidermis</tissue>
    </source>
</reference>
<reference key="2">
    <citation type="journal article" date="2004" name="Nature">
        <title>DNA sequence and analysis of human chromosome 9.</title>
        <authorList>
            <person name="Humphray S.J."/>
            <person name="Oliver K."/>
            <person name="Hunt A.R."/>
            <person name="Plumb R.W."/>
            <person name="Loveland J.E."/>
            <person name="Howe K.L."/>
            <person name="Andrews T.D."/>
            <person name="Searle S."/>
            <person name="Hunt S.E."/>
            <person name="Scott C.E."/>
            <person name="Jones M.C."/>
            <person name="Ainscough R."/>
            <person name="Almeida J.P."/>
            <person name="Ambrose K.D."/>
            <person name="Ashwell R.I.S."/>
            <person name="Babbage A.K."/>
            <person name="Babbage S."/>
            <person name="Bagguley C.L."/>
            <person name="Bailey J."/>
            <person name="Banerjee R."/>
            <person name="Barker D.J."/>
            <person name="Barlow K.F."/>
            <person name="Bates K."/>
            <person name="Beasley H."/>
            <person name="Beasley O."/>
            <person name="Bird C.P."/>
            <person name="Bray-Allen S."/>
            <person name="Brown A.J."/>
            <person name="Brown J.Y."/>
            <person name="Burford D."/>
            <person name="Burrill W."/>
            <person name="Burton J."/>
            <person name="Carder C."/>
            <person name="Carter N.P."/>
            <person name="Chapman J.C."/>
            <person name="Chen Y."/>
            <person name="Clarke G."/>
            <person name="Clark S.Y."/>
            <person name="Clee C.M."/>
            <person name="Clegg S."/>
            <person name="Collier R.E."/>
            <person name="Corby N."/>
            <person name="Crosier M."/>
            <person name="Cummings A.T."/>
            <person name="Davies J."/>
            <person name="Dhami P."/>
            <person name="Dunn M."/>
            <person name="Dutta I."/>
            <person name="Dyer L.W."/>
            <person name="Earthrowl M.E."/>
            <person name="Faulkner L."/>
            <person name="Fleming C.J."/>
            <person name="Frankish A."/>
            <person name="Frankland J.A."/>
            <person name="French L."/>
            <person name="Fricker D.G."/>
            <person name="Garner P."/>
            <person name="Garnett J."/>
            <person name="Ghori J."/>
            <person name="Gilbert J.G.R."/>
            <person name="Glison C."/>
            <person name="Grafham D.V."/>
            <person name="Gribble S."/>
            <person name="Griffiths C."/>
            <person name="Griffiths-Jones S."/>
            <person name="Grocock R."/>
            <person name="Guy J."/>
            <person name="Hall R.E."/>
            <person name="Hammond S."/>
            <person name="Harley J.L."/>
            <person name="Harrison E.S.I."/>
            <person name="Hart E.A."/>
            <person name="Heath P.D."/>
            <person name="Henderson C.D."/>
            <person name="Hopkins B.L."/>
            <person name="Howard P.J."/>
            <person name="Howden P.J."/>
            <person name="Huckle E."/>
            <person name="Johnson C."/>
            <person name="Johnson D."/>
            <person name="Joy A.A."/>
            <person name="Kay M."/>
            <person name="Keenan S."/>
            <person name="Kershaw J.K."/>
            <person name="Kimberley A.M."/>
            <person name="King A."/>
            <person name="Knights A."/>
            <person name="Laird G.K."/>
            <person name="Langford C."/>
            <person name="Lawlor S."/>
            <person name="Leongamornlert D.A."/>
            <person name="Leversha M."/>
            <person name="Lloyd C."/>
            <person name="Lloyd D.M."/>
            <person name="Lovell J."/>
            <person name="Martin S."/>
            <person name="Mashreghi-Mohammadi M."/>
            <person name="Matthews L."/>
            <person name="McLaren S."/>
            <person name="McLay K.E."/>
            <person name="McMurray A."/>
            <person name="Milne S."/>
            <person name="Nickerson T."/>
            <person name="Nisbett J."/>
            <person name="Nordsiek G."/>
            <person name="Pearce A.V."/>
            <person name="Peck A.I."/>
            <person name="Porter K.M."/>
            <person name="Pandian R."/>
            <person name="Pelan S."/>
            <person name="Phillimore B."/>
            <person name="Povey S."/>
            <person name="Ramsey Y."/>
            <person name="Rand V."/>
            <person name="Scharfe M."/>
            <person name="Sehra H.K."/>
            <person name="Shownkeen R."/>
            <person name="Sims S.K."/>
            <person name="Skuce C.D."/>
            <person name="Smith M."/>
            <person name="Steward C.A."/>
            <person name="Swarbreck D."/>
            <person name="Sycamore N."/>
            <person name="Tester J."/>
            <person name="Thorpe A."/>
            <person name="Tracey A."/>
            <person name="Tromans A."/>
            <person name="Thomas D.W."/>
            <person name="Wall M."/>
            <person name="Wallis J.M."/>
            <person name="West A.P."/>
            <person name="Whitehead S.L."/>
            <person name="Willey D.L."/>
            <person name="Williams S.A."/>
            <person name="Wilming L."/>
            <person name="Wray P.W."/>
            <person name="Young L."/>
            <person name="Ashurst J.L."/>
            <person name="Coulson A."/>
            <person name="Blocker H."/>
            <person name="Durbin R.M."/>
            <person name="Sulston J.E."/>
            <person name="Hubbard T."/>
            <person name="Jackson M.J."/>
            <person name="Bentley D.R."/>
            <person name="Beck S."/>
            <person name="Rogers J."/>
            <person name="Dunham I."/>
        </authorList>
    </citation>
    <scope>NUCLEOTIDE SEQUENCE [LARGE SCALE GENOMIC DNA]</scope>
</reference>
<reference key="3">
    <citation type="submission" date="2005-07" db="EMBL/GenBank/DDBJ databases">
        <authorList>
            <person name="Mural R.J."/>
            <person name="Istrail S."/>
            <person name="Sutton G.G."/>
            <person name="Florea L."/>
            <person name="Halpern A.L."/>
            <person name="Mobarry C.M."/>
            <person name="Lippert R."/>
            <person name="Walenz B."/>
            <person name="Shatkay H."/>
            <person name="Dew I."/>
            <person name="Miller J.R."/>
            <person name="Flanigan M.J."/>
            <person name="Edwards N.J."/>
            <person name="Bolanos R."/>
            <person name="Fasulo D."/>
            <person name="Halldorsson B.V."/>
            <person name="Hannenhalli S."/>
            <person name="Turner R."/>
            <person name="Yooseph S."/>
            <person name="Lu F."/>
            <person name="Nusskern D.R."/>
            <person name="Shue B.C."/>
            <person name="Zheng X.H."/>
            <person name="Zhong F."/>
            <person name="Delcher A.L."/>
            <person name="Huson D.H."/>
            <person name="Kravitz S.A."/>
            <person name="Mouchard L."/>
            <person name="Reinert K."/>
            <person name="Remington K.A."/>
            <person name="Clark A.G."/>
            <person name="Waterman M.S."/>
            <person name="Eichler E.E."/>
            <person name="Adams M.D."/>
            <person name="Hunkapiller M.W."/>
            <person name="Myers E.W."/>
            <person name="Venter J.C."/>
        </authorList>
    </citation>
    <scope>NUCLEOTIDE SEQUENCE [LARGE SCALE GENOMIC DNA]</scope>
</reference>
<reference key="4">
    <citation type="journal article" date="2004" name="Genome Res.">
        <title>The status, quality, and expansion of the NIH full-length cDNA project: the Mammalian Gene Collection (MGC).</title>
        <authorList>
            <consortium name="The MGC Project Team"/>
        </authorList>
    </citation>
    <scope>NUCLEOTIDE SEQUENCE [LARGE SCALE MRNA]</scope>
    <source>
        <tissue>Eye</tissue>
        <tissue>Placenta</tissue>
    </source>
</reference>
<reference key="5">
    <citation type="journal article" date="2003" name="EMBO J.">
        <title>Purification and functional characterization of the human N-CoR complex: the roles of HDAC3, TBL1 and TBLR1.</title>
        <authorList>
            <person name="Yoon H.-G."/>
            <person name="Chan D.W."/>
            <person name="Huang Z.-Q."/>
            <person name="Li J."/>
            <person name="Fondell J.D."/>
            <person name="Qin J."/>
            <person name="Wong J."/>
        </authorList>
    </citation>
    <scope>COMPONENT OF THE N-COR COMPLEX WITH TBL1R; TBL1X AND HDAC3</scope>
</reference>
<comment type="subunit">
    <text evidence="1">Binds actin (By similarity). Component of the N-Cor repressor complex, at least composed of NCOR1, NCOR2, HDAC3, TBL1X, TBL1R, CORO2A and GPS2.</text>
</comment>
<comment type="interaction">
    <interactant intactId="EBI-2835660">
        <id>Q92828</id>
    </interactant>
    <interactant intactId="EBI-437804">
        <id>Q9NYF8</id>
        <label>BCLAF1</label>
    </interactant>
    <organismsDiffer>false</organismsDiffer>
    <experiments>3</experiments>
</comment>
<comment type="interaction">
    <interactant intactId="EBI-2835660">
        <id>Q92828</id>
    </interactant>
    <interactant intactId="EBI-949340">
        <id>Q16595</id>
        <label>FXN</label>
    </interactant>
    <organismsDiffer>false</organismsDiffer>
    <experiments>3</experiments>
</comment>
<comment type="interaction">
    <interactant intactId="EBI-2835660">
        <id>Q92828</id>
    </interactant>
    <interactant intactId="EBI-725647">
        <id>Q99732</id>
        <label>LITAF</label>
    </interactant>
    <organismsDiffer>false</organismsDiffer>
    <experiments>3</experiments>
</comment>
<comment type="interaction">
    <interactant intactId="EBI-2835660">
        <id>Q92828</id>
    </interactant>
    <interactant intactId="EBI-745354">
        <id>P55055</id>
        <label>NR1H2</label>
    </interactant>
    <organismsDiffer>false</organismsDiffer>
    <experiments>4</experiments>
</comment>
<comment type="similarity">
    <text evidence="3">Belongs to the WD repeat coronin family.</text>
</comment>
<organism>
    <name type="scientific">Homo sapiens</name>
    <name type="common">Human</name>
    <dbReference type="NCBI Taxonomy" id="9606"/>
    <lineage>
        <taxon>Eukaryota</taxon>
        <taxon>Metazoa</taxon>
        <taxon>Chordata</taxon>
        <taxon>Craniata</taxon>
        <taxon>Vertebrata</taxon>
        <taxon>Euteleostomi</taxon>
        <taxon>Mammalia</taxon>
        <taxon>Eutheria</taxon>
        <taxon>Euarchontoglires</taxon>
        <taxon>Primates</taxon>
        <taxon>Haplorrhini</taxon>
        <taxon>Catarrhini</taxon>
        <taxon>Hominidae</taxon>
        <taxon>Homo</taxon>
    </lineage>
</organism>
<gene>
    <name type="primary">CORO2A</name>
    <name type="synonym">IR10</name>
    <name type="synonym">WDR2</name>
</gene>
<evidence type="ECO:0000250" key="1"/>
<evidence type="ECO:0000255" key="2"/>
<evidence type="ECO:0000305" key="3"/>
<proteinExistence type="evidence at protein level"/>
<name>COR2A_HUMAN</name>
<protein>
    <recommendedName>
        <fullName>Coronin-2A</fullName>
    </recommendedName>
    <alternativeName>
        <fullName>IR10</fullName>
    </alternativeName>
    <alternativeName>
        <fullName>WD repeat-containing protein 2</fullName>
    </alternativeName>
</protein>
<accession>Q92828</accession>
<accession>Q5TBR5</accession>
<accession>Q92829</accession>
<accession>Q9BWS5</accession>